<sequence length="147" mass="16672">MAAQRLGKRVLSKLQSPSRARGPGGSPGGLQKRHARVTVKYDRRELQRRLDVEKWIDGRLEELYRGREADMPDEVNIDELLELESEEERSRKIQGLLKSCTNPTENFVQELLVKLRGLHKQPGLRQPSPSGDGSLSPRQDRARTAPP</sequence>
<gene>
    <name type="primary">CPI17</name>
</gene>
<proteinExistence type="evidence at protein level"/>
<feature type="chain" id="PRO_0000071488" description="Protein phosphatase 1 regulatory subunit 14A">
    <location>
        <begin position="1"/>
        <end position="147"/>
    </location>
</feature>
<feature type="region of interest" description="Disordered" evidence="2">
    <location>
        <begin position="1"/>
        <end position="37"/>
    </location>
</feature>
<feature type="region of interest" description="Inhibitory">
    <location>
        <begin position="35"/>
        <end position="120"/>
    </location>
</feature>
<feature type="region of interest" description="Disordered" evidence="2">
    <location>
        <begin position="118"/>
        <end position="147"/>
    </location>
</feature>
<feature type="compositionally biased region" description="Basic residues" evidence="2">
    <location>
        <begin position="1"/>
        <end position="11"/>
    </location>
</feature>
<feature type="compositionally biased region" description="Polar residues" evidence="2">
    <location>
        <begin position="127"/>
        <end position="137"/>
    </location>
</feature>
<feature type="compositionally biased region" description="Basic and acidic residues" evidence="2">
    <location>
        <begin position="138"/>
        <end position="147"/>
    </location>
</feature>
<feature type="modified residue" description="Phosphoserine" evidence="1">
    <location>
        <position position="26"/>
    </location>
</feature>
<feature type="modified residue" description="Phosphothreonine" evidence="3 4 6">
    <location>
        <position position="38"/>
    </location>
</feature>
<feature type="modified residue" description="Phosphoserine" evidence="1">
    <location>
        <position position="128"/>
    </location>
</feature>
<feature type="modified residue" description="Phosphoserine" evidence="1">
    <location>
        <position position="134"/>
    </location>
</feature>
<feature type="modified residue" description="Phosphoserine" evidence="1">
    <location>
        <position position="136"/>
    </location>
</feature>
<feature type="mutagenesis site" description="Abolishes phosphorylation (in vitro) and strongly reduces inhibitory activity." evidence="3 5 6">
    <original>T</original>
    <variation>A</variation>
    <location>
        <position position="38"/>
    </location>
</feature>
<feature type="mutagenesis site" description="Reduces inhibitory activity at least 1000-fold." evidence="3 5 6">
    <original>T</original>
    <variation>E</variation>
    <location>
        <position position="38"/>
    </location>
</feature>
<feature type="mutagenesis site" description="Promotes dephosphorylation of T-38. Abolishes phosphorylation-dependent increase of inhibitory activity." evidence="5">
    <original>Y</original>
    <variation>A</variation>
    <location>
        <position position="41"/>
    </location>
</feature>
<feature type="mutagenesis site" description="Strongly reduces inhibitory activity." evidence="5">
    <original>D</original>
    <variation>A</variation>
    <location>
        <position position="42"/>
    </location>
</feature>
<feature type="mutagenesis site" description="Strongly reduces inhibitory activity." evidence="5">
    <original>R</original>
    <variation>A</variation>
    <location>
        <position position="43"/>
    </location>
</feature>
<feature type="mutagenesis site" description="Reduces inhibitory activity." evidence="5">
    <original>R</original>
    <variation>A</variation>
    <location>
        <position position="44"/>
    </location>
</feature>
<feature type="strand" evidence="9">
    <location>
        <begin position="24"/>
        <end position="26"/>
    </location>
</feature>
<feature type="strand" evidence="9">
    <location>
        <begin position="34"/>
        <end position="37"/>
    </location>
</feature>
<feature type="strand" evidence="9">
    <location>
        <begin position="45"/>
        <end position="47"/>
    </location>
</feature>
<feature type="helix" evidence="9">
    <location>
        <begin position="48"/>
        <end position="62"/>
    </location>
</feature>
<feature type="helix" evidence="11">
    <location>
        <begin position="65"/>
        <end position="67"/>
    </location>
</feature>
<feature type="turn" evidence="11">
    <location>
        <begin position="68"/>
        <end position="70"/>
    </location>
</feature>
<feature type="helix" evidence="9">
    <location>
        <begin position="78"/>
        <end position="81"/>
    </location>
</feature>
<feature type="turn" evidence="9">
    <location>
        <begin position="84"/>
        <end position="87"/>
    </location>
</feature>
<feature type="helix" evidence="9">
    <location>
        <begin position="88"/>
        <end position="98"/>
    </location>
</feature>
<feature type="strand" evidence="10">
    <location>
        <begin position="99"/>
        <end position="102"/>
    </location>
</feature>
<feature type="helix" evidence="9">
    <location>
        <begin position="105"/>
        <end position="114"/>
    </location>
</feature>
<feature type="turn" evidence="9">
    <location>
        <begin position="115"/>
        <end position="118"/>
    </location>
</feature>
<reference key="1">
    <citation type="journal article" date="1997" name="FEBS Lett.">
        <title>Molecular cloning of a novel phosphorylation-dependent inhibitory protein of protein phosphatase-1 (CPI-17) in smooth muscle: its specific localization in smooth muscle.</title>
        <authorList>
            <person name="Eto M."/>
            <person name="Senba S."/>
            <person name="Morita F."/>
            <person name="Yazawa M."/>
        </authorList>
    </citation>
    <scope>NUCLEOTIDE SEQUENCE [MRNA]</scope>
    <scope>FUNCTION</scope>
    <scope>TISSUE SPECIFICITY</scope>
    <source>
        <tissue>Aorta</tissue>
    </source>
</reference>
<reference key="2">
    <citation type="journal article" date="1995" name="J. Biochem.">
        <title>A novel protein phosphatase-1 inhibitory protein potentiated by protein kinase C. Isolation from porcine aorta media and characterization.</title>
        <authorList>
            <person name="Eto M."/>
            <person name="Ohmori T."/>
            <person name="Suzuki M."/>
            <person name="Furuya K."/>
            <person name="Morita F."/>
        </authorList>
    </citation>
    <scope>PROTEIN SEQUENCE OF 9-71 AND 93-145</scope>
    <scope>FUNCTION</scope>
    <scope>MUTAGENESIS OF THR-38</scope>
    <scope>PHOSPHORYLATION AT THR-38</scope>
</reference>
<reference key="3">
    <citation type="journal article" date="2000" name="Biochem. Biophys. Res. Commun.">
        <title>Phosphorylation of CPI-17, an inhibitor of myosin phosphatase, by protein kinase N.</title>
        <authorList>
            <person name="Hamaguchi T."/>
            <person name="Ito M."/>
            <person name="Feng J."/>
            <person name="Seko T."/>
            <person name="Koyama M."/>
            <person name="Machida H."/>
            <person name="Takase K."/>
            <person name="Amano M."/>
            <person name="Kaibuchi K."/>
            <person name="Hartshorne D.J."/>
            <person name="Nakano T."/>
        </authorList>
    </citation>
    <scope>PHOSPHORYLATION AT THR-38</scope>
    <scope>FUNCTION</scope>
</reference>
<reference key="4">
    <citation type="journal article" date="2000" name="FEBS Lett.">
        <title>Phosphorylation of CPI-17, an inhibitory phosphoprotein of smooth muscle myosin phosphatase, by Rho-kinase.</title>
        <authorList>
            <person name="Koyama M."/>
            <person name="Ito M."/>
            <person name="Feng J."/>
            <person name="Seko T."/>
            <person name="Shiraki K."/>
            <person name="Takase K."/>
            <person name="Hartshorne D.J."/>
            <person name="Nakano T."/>
        </authorList>
    </citation>
    <scope>PHOSPHORYLATION AT THR-38</scope>
    <scope>MUTAGENESIS OF THR-38</scope>
    <scope>FUNCTION</scope>
</reference>
<reference key="5">
    <citation type="journal article" date="2001" name="J. Biol. Chem.">
        <title>Defining the structural determinants and a potential mechanism for inhibition of myosin phosphatase by the protein kinase C-potentiated inhibitor protein of 17 kDa.</title>
        <authorList>
            <person name="Hayashi Y."/>
            <person name="Senba S."/>
            <person name="Yazawa M."/>
            <person name="Brautigan D.L."/>
            <person name="Eto M."/>
        </authorList>
    </citation>
    <scope>MUTAGENESIS OF THR-38; TYR-41; ASP-42; ARG-43 AND ARG-44</scope>
    <scope>SUBCELLULAR LOCATION</scope>
</reference>
<reference key="6">
    <citation type="journal article" date="2001" name="J. Mol. Biol.">
        <title>Solution NMR structure of the myosin phosphatase inhibitor protein CPI-17 shows phosphorylation-induced conformational changes responsible for activation.</title>
        <authorList>
            <person name="Ohki S.-Y."/>
            <person name="Eto M."/>
            <person name="Kariya E."/>
            <person name="Hayano T."/>
            <person name="Hayashi Y."/>
            <person name="Yazawa M."/>
            <person name="Brautigan D.L."/>
            <person name="Kainosho M."/>
        </authorList>
    </citation>
    <scope>STRUCTURE BY NMR OF 35-120</scope>
</reference>
<reference key="7">
    <citation type="journal article" date="2003" name="J. Mol. Biol.">
        <title>Distinctive solution conformation of phosphatase inhibitor CPI-17 substituted with aspartate at the phosphorylation-site threonine residue.</title>
        <authorList>
            <person name="Ohki S.-Y."/>
            <person name="Eto M."/>
            <person name="Shimizu M."/>
            <person name="Takada R."/>
            <person name="Brautigan D.L."/>
            <person name="Kainosho M."/>
        </authorList>
    </citation>
    <scope>STRUCTURE BY NMR OF 22-120 OF MUTANT ASP-38</scope>
</reference>
<organism>
    <name type="scientific">Sus scrofa</name>
    <name type="common">Pig</name>
    <dbReference type="NCBI Taxonomy" id="9823"/>
    <lineage>
        <taxon>Eukaryota</taxon>
        <taxon>Metazoa</taxon>
        <taxon>Chordata</taxon>
        <taxon>Craniata</taxon>
        <taxon>Vertebrata</taxon>
        <taxon>Euteleostomi</taxon>
        <taxon>Mammalia</taxon>
        <taxon>Eutheria</taxon>
        <taxon>Laurasiatheria</taxon>
        <taxon>Artiodactyla</taxon>
        <taxon>Suina</taxon>
        <taxon>Suidae</taxon>
        <taxon>Sus</taxon>
    </lineage>
</organism>
<dbReference type="EMBL" id="AB008376">
    <property type="protein sequence ID" value="BAA22995.1"/>
    <property type="molecule type" value="mRNA"/>
</dbReference>
<dbReference type="RefSeq" id="NP_999502.1">
    <property type="nucleotide sequence ID" value="NM_214337.1"/>
</dbReference>
<dbReference type="PDB" id="1J2M">
    <property type="method" value="NMR"/>
    <property type="chains" value="A=22-120"/>
</dbReference>
<dbReference type="PDB" id="1J2N">
    <property type="method" value="NMR"/>
    <property type="chains" value="A=22-120"/>
</dbReference>
<dbReference type="PDB" id="1K5O">
    <property type="method" value="NMR"/>
    <property type="chains" value="A=35-120"/>
</dbReference>
<dbReference type="PDB" id="2RLT">
    <property type="method" value="NMR"/>
    <property type="chains" value="A=22-120"/>
</dbReference>
<dbReference type="PDBsum" id="1J2M"/>
<dbReference type="PDBsum" id="1J2N"/>
<dbReference type="PDBsum" id="1K5O"/>
<dbReference type="PDBsum" id="2RLT"/>
<dbReference type="BMRB" id="O18734"/>
<dbReference type="SMR" id="O18734"/>
<dbReference type="DIP" id="DIP-48426N"/>
<dbReference type="FunCoup" id="O18734">
    <property type="interactions" value="46"/>
</dbReference>
<dbReference type="IntAct" id="O18734">
    <property type="interactions" value="1"/>
</dbReference>
<dbReference type="STRING" id="9823.ENSSSCP00000038504"/>
<dbReference type="iPTMnet" id="O18734"/>
<dbReference type="PaxDb" id="9823-ENSSSCP00000021211"/>
<dbReference type="PeptideAtlas" id="O18734"/>
<dbReference type="Ensembl" id="ENSSSCT00025003191.1">
    <property type="protein sequence ID" value="ENSSSCP00025001174.1"/>
    <property type="gene ID" value="ENSSSCG00025002455.1"/>
</dbReference>
<dbReference type="Ensembl" id="ENSSSCT00030078693.1">
    <property type="protein sequence ID" value="ENSSSCP00030036012.1"/>
    <property type="gene ID" value="ENSSSCG00030056455.1"/>
</dbReference>
<dbReference type="Ensembl" id="ENSSSCT00035046521.1">
    <property type="protein sequence ID" value="ENSSSCP00035018596.1"/>
    <property type="gene ID" value="ENSSSCG00035035095.1"/>
</dbReference>
<dbReference type="Ensembl" id="ENSSSCT00040077589.1">
    <property type="protein sequence ID" value="ENSSSCP00040033383.1"/>
    <property type="gene ID" value="ENSSSCG00040057186.1"/>
</dbReference>
<dbReference type="Ensembl" id="ENSSSCT00045004740.1">
    <property type="protein sequence ID" value="ENSSSCP00045003096.1"/>
    <property type="gene ID" value="ENSSSCG00045002943.1"/>
</dbReference>
<dbReference type="Ensembl" id="ENSSSCT00050059824.1">
    <property type="protein sequence ID" value="ENSSSCP00050025706.1"/>
    <property type="gene ID" value="ENSSSCG00050043939.1"/>
</dbReference>
<dbReference type="Ensembl" id="ENSSSCT00055061484.1">
    <property type="protein sequence ID" value="ENSSSCP00055049345.1"/>
    <property type="gene ID" value="ENSSSCG00055030798.1"/>
</dbReference>
<dbReference type="Ensembl" id="ENSSSCT00060047176.1">
    <property type="protein sequence ID" value="ENSSSCP00060020207.1"/>
    <property type="gene ID" value="ENSSSCG00060034795.1"/>
</dbReference>
<dbReference type="Ensembl" id="ENSSSCT00065048846.1">
    <property type="protein sequence ID" value="ENSSSCP00065021110.1"/>
    <property type="gene ID" value="ENSSSCG00065035831.1"/>
</dbReference>
<dbReference type="Ensembl" id="ENSSSCT00070014421.1">
    <property type="protein sequence ID" value="ENSSSCP00070011901.1"/>
    <property type="gene ID" value="ENSSSCG00070007478.1"/>
</dbReference>
<dbReference type="Ensembl" id="ENSSSCT00105075817">
    <property type="protein sequence ID" value="ENSSSCP00105053724"/>
    <property type="gene ID" value="ENSSSCG00105039743"/>
</dbReference>
<dbReference type="Ensembl" id="ENSSSCT00110062531">
    <property type="protein sequence ID" value="ENSSSCP00110043782"/>
    <property type="gene ID" value="ENSSSCG00110032772"/>
</dbReference>
<dbReference type="Ensembl" id="ENSSSCT00115035722">
    <property type="protein sequence ID" value="ENSSSCP00115033863"/>
    <property type="gene ID" value="ENSSSCG00115020171"/>
</dbReference>
<dbReference type="Ensembl" id="ENSSSCT00130047751">
    <property type="protein sequence ID" value="ENSSSCP00130033572"/>
    <property type="gene ID" value="ENSSSCG00130024678"/>
</dbReference>
<dbReference type="GeneID" id="397610"/>
<dbReference type="KEGG" id="ssc:397610"/>
<dbReference type="CTD" id="94274"/>
<dbReference type="eggNOG" id="ENOG502S2I4">
    <property type="taxonomic scope" value="Eukaryota"/>
</dbReference>
<dbReference type="HOGENOM" id="CLU_114155_2_0_1"/>
<dbReference type="InParanoid" id="O18734"/>
<dbReference type="OrthoDB" id="8193882at2759"/>
<dbReference type="TreeFam" id="TF105546"/>
<dbReference type="Reactome" id="R-SSC-5625740">
    <property type="pathway name" value="RHO GTPases activate PKNs"/>
</dbReference>
<dbReference type="EvolutionaryTrace" id="O18734"/>
<dbReference type="Proteomes" id="UP000008227">
    <property type="component" value="Unplaced"/>
</dbReference>
<dbReference type="Proteomes" id="UP000314985">
    <property type="component" value="Chromosome 6"/>
</dbReference>
<dbReference type="Proteomes" id="UP000694570">
    <property type="component" value="Unplaced"/>
</dbReference>
<dbReference type="Proteomes" id="UP000694571">
    <property type="component" value="Unplaced"/>
</dbReference>
<dbReference type="Proteomes" id="UP000694720">
    <property type="component" value="Unplaced"/>
</dbReference>
<dbReference type="Proteomes" id="UP000694722">
    <property type="component" value="Unplaced"/>
</dbReference>
<dbReference type="Proteomes" id="UP000694723">
    <property type="component" value="Unplaced"/>
</dbReference>
<dbReference type="Proteomes" id="UP000694724">
    <property type="component" value="Unplaced"/>
</dbReference>
<dbReference type="Proteomes" id="UP000694725">
    <property type="component" value="Unplaced"/>
</dbReference>
<dbReference type="Proteomes" id="UP000694726">
    <property type="component" value="Unplaced"/>
</dbReference>
<dbReference type="Proteomes" id="UP000694727">
    <property type="component" value="Unplaced"/>
</dbReference>
<dbReference type="Proteomes" id="UP000694728">
    <property type="component" value="Unplaced"/>
</dbReference>
<dbReference type="GO" id="GO:0005737">
    <property type="term" value="C:cytoplasm"/>
    <property type="evidence" value="ECO:0007669"/>
    <property type="project" value="UniProtKB-SubCell"/>
</dbReference>
<dbReference type="GO" id="GO:0004865">
    <property type="term" value="F:protein serine/threonine phosphatase inhibitor activity"/>
    <property type="evidence" value="ECO:0000318"/>
    <property type="project" value="GO_Central"/>
</dbReference>
<dbReference type="FunFam" id="1.10.150.220:FF:000002">
    <property type="entry name" value="protein phosphatase 1 regulatory subunit 14A"/>
    <property type="match status" value="1"/>
</dbReference>
<dbReference type="Gene3D" id="1.10.150.220">
    <property type="entry name" value="CPI-17"/>
    <property type="match status" value="1"/>
</dbReference>
<dbReference type="InterPro" id="IPR008025">
    <property type="entry name" value="CPI-17"/>
</dbReference>
<dbReference type="InterPro" id="IPR036658">
    <property type="entry name" value="CPI-17_sf"/>
</dbReference>
<dbReference type="PANTHER" id="PTHR16188">
    <property type="entry name" value="PROTEIN PHOSPHATASE 1 INHIBITOR POTENTIATED BY PROTEIN KINASE C"/>
    <property type="match status" value="1"/>
</dbReference>
<dbReference type="PANTHER" id="PTHR16188:SF4">
    <property type="entry name" value="PROTEIN PHOSPHATASE 1 REGULATORY SUBUNIT 14A"/>
    <property type="match status" value="1"/>
</dbReference>
<dbReference type="Pfam" id="PF05361">
    <property type="entry name" value="PP1_inhibitor"/>
    <property type="match status" value="1"/>
</dbReference>
<dbReference type="SUPFAM" id="SSF81790">
    <property type="entry name" value="Myosin phosphatase inhibitor 17kDa protein, CPI-17"/>
    <property type="match status" value="1"/>
</dbReference>
<accession>O18734</accession>
<accession>Q9TQZ8</accession>
<accession>Q9TQZ9</accession>
<accession>Q9TR00</accession>
<accession>Q9TR01</accession>
<accession>Q9TR02</accession>
<comment type="function">
    <text evidence="3 4 6 7">Inhibitor of PPP1CA. Has over 1000-fold higher inhibitory activity when phosphorylated, creating a molecular switch for regulating the phosphorylation status of PPP1CA substrates and smooth muscle contraction.</text>
</comment>
<comment type="interaction">
    <interactant intactId="EBI-15674919">
        <id>O18734</id>
    </interactant>
    <interactant intactId="EBI-351726">
        <id>O14974</id>
        <label>PPP1R12A</label>
    </interactant>
    <organismsDiffer>true</organismsDiffer>
    <experiments>2</experiments>
</comment>
<comment type="subcellular location">
    <subcellularLocation>
        <location evidence="5">Cytoplasm</location>
    </subcellularLocation>
</comment>
<comment type="tissue specificity">
    <text evidence="7">Detected in aorta smooth muscle and bladder.</text>
</comment>
<comment type="PTM">
    <text evidence="3 4 6">Phosphorylation of Thr-38 induces a conformation change.</text>
</comment>
<comment type="similarity">
    <text evidence="8">Belongs to the PP1 inhibitor family.</text>
</comment>
<protein>
    <recommendedName>
        <fullName>Protein phosphatase 1 regulatory subunit 14A</fullName>
    </recommendedName>
    <alternativeName>
        <fullName>17 kDa PKC-potentiated inhibitory protein of PP1</fullName>
    </alternativeName>
    <alternativeName>
        <fullName>Protein kinase C-potentiated inhibitor protein of 17 kDa</fullName>
        <shortName>CPI-17</shortName>
    </alternativeName>
</protein>
<keyword id="KW-0002">3D-structure</keyword>
<keyword id="KW-0963">Cytoplasm</keyword>
<keyword id="KW-0903">Direct protein sequencing</keyword>
<keyword id="KW-0597">Phosphoprotein</keyword>
<keyword id="KW-0650">Protein phosphatase inhibitor</keyword>
<keyword id="KW-1185">Reference proteome</keyword>
<name>PP14A_PIG</name>
<evidence type="ECO:0000250" key="1">
    <source>
        <dbReference type="UniProtKB" id="Q96A00"/>
    </source>
</evidence>
<evidence type="ECO:0000256" key="2">
    <source>
        <dbReference type="SAM" id="MobiDB-lite"/>
    </source>
</evidence>
<evidence type="ECO:0000269" key="3">
    <source>
    </source>
</evidence>
<evidence type="ECO:0000269" key="4">
    <source>
    </source>
</evidence>
<evidence type="ECO:0000269" key="5">
    <source>
    </source>
</evidence>
<evidence type="ECO:0000269" key="6">
    <source>
    </source>
</evidence>
<evidence type="ECO:0000269" key="7">
    <source>
    </source>
</evidence>
<evidence type="ECO:0000305" key="8"/>
<evidence type="ECO:0007829" key="9">
    <source>
        <dbReference type="PDB" id="1J2M"/>
    </source>
</evidence>
<evidence type="ECO:0007829" key="10">
    <source>
        <dbReference type="PDB" id="1J2N"/>
    </source>
</evidence>
<evidence type="ECO:0007829" key="11">
    <source>
        <dbReference type="PDB" id="1K5O"/>
    </source>
</evidence>